<organism>
    <name type="scientific">Tropheryma whipplei (strain TW08/27)</name>
    <name type="common">Whipple's bacillus</name>
    <dbReference type="NCBI Taxonomy" id="218496"/>
    <lineage>
        <taxon>Bacteria</taxon>
        <taxon>Bacillati</taxon>
        <taxon>Actinomycetota</taxon>
        <taxon>Actinomycetes</taxon>
        <taxon>Micrococcales</taxon>
        <taxon>Tropherymataceae</taxon>
        <taxon>Tropheryma</taxon>
    </lineage>
</organism>
<accession>Q83IG0</accession>
<gene>
    <name evidence="1" type="primary">htpX</name>
    <name type="ordered locus">TW013</name>
</gene>
<evidence type="ECO:0000255" key="1">
    <source>
        <dbReference type="HAMAP-Rule" id="MF_00188"/>
    </source>
</evidence>
<sequence>MMYSFIARNKINTFLILFVFILACGGFGLLAGRFLGMSFFLFILLLAAGYACVQYFFSGRLAVLMSGARKISRNDNPRLWNTVENLSITTGLPMPEVYIVDDPAPNAFATGRDPKHAKVAATSGLLEILDDSELEGVMAHEMGHVKNYDIRVSTIVFGLVSAVGLISDMVLRALIWGDNRREGNSAFSFAIVLFFSLLAPIAAMLVQLAVSREREYLADATGALTTRYPAALASALAKLEGNARPLQRQSSSMAHLWISNPMPRGFFRKLFSTHPPTEERIRRLKEMGNQF</sequence>
<dbReference type="EC" id="3.4.24.-" evidence="1"/>
<dbReference type="EMBL" id="BX251410">
    <property type="protein sequence ID" value="CAD66705.1"/>
    <property type="molecule type" value="Genomic_DNA"/>
</dbReference>
<dbReference type="RefSeq" id="WP_011095986.1">
    <property type="nucleotide sequence ID" value="NC_004551.1"/>
</dbReference>
<dbReference type="SMR" id="Q83IG0"/>
<dbReference type="GeneID" id="67387793"/>
<dbReference type="KEGG" id="tws:TW013"/>
<dbReference type="HOGENOM" id="CLU_042266_3_0_11"/>
<dbReference type="GO" id="GO:0005886">
    <property type="term" value="C:plasma membrane"/>
    <property type="evidence" value="ECO:0007669"/>
    <property type="project" value="UniProtKB-SubCell"/>
</dbReference>
<dbReference type="GO" id="GO:0004222">
    <property type="term" value="F:metalloendopeptidase activity"/>
    <property type="evidence" value="ECO:0007669"/>
    <property type="project" value="UniProtKB-UniRule"/>
</dbReference>
<dbReference type="GO" id="GO:0008270">
    <property type="term" value="F:zinc ion binding"/>
    <property type="evidence" value="ECO:0007669"/>
    <property type="project" value="UniProtKB-UniRule"/>
</dbReference>
<dbReference type="GO" id="GO:0006508">
    <property type="term" value="P:proteolysis"/>
    <property type="evidence" value="ECO:0007669"/>
    <property type="project" value="UniProtKB-KW"/>
</dbReference>
<dbReference type="CDD" id="cd07340">
    <property type="entry name" value="M48B_Htpx_like"/>
    <property type="match status" value="1"/>
</dbReference>
<dbReference type="Gene3D" id="3.30.2010.10">
    <property type="entry name" value="Metalloproteases ('zincins'), catalytic domain"/>
    <property type="match status" value="1"/>
</dbReference>
<dbReference type="HAMAP" id="MF_00188">
    <property type="entry name" value="Pept_M48_protease_HtpX"/>
    <property type="match status" value="1"/>
</dbReference>
<dbReference type="InterPro" id="IPR050083">
    <property type="entry name" value="HtpX_protease"/>
</dbReference>
<dbReference type="InterPro" id="IPR022919">
    <property type="entry name" value="Pept_M48_protease_HtpX"/>
</dbReference>
<dbReference type="InterPro" id="IPR001915">
    <property type="entry name" value="Peptidase_M48"/>
</dbReference>
<dbReference type="PANTHER" id="PTHR43221">
    <property type="entry name" value="PROTEASE HTPX"/>
    <property type="match status" value="1"/>
</dbReference>
<dbReference type="PANTHER" id="PTHR43221:SF1">
    <property type="entry name" value="PROTEASE HTPX"/>
    <property type="match status" value="1"/>
</dbReference>
<dbReference type="Pfam" id="PF01435">
    <property type="entry name" value="Peptidase_M48"/>
    <property type="match status" value="1"/>
</dbReference>
<comment type="cofactor">
    <cofactor evidence="1">
        <name>Zn(2+)</name>
        <dbReference type="ChEBI" id="CHEBI:29105"/>
    </cofactor>
    <text evidence="1">Binds 1 zinc ion per subunit.</text>
</comment>
<comment type="subcellular location">
    <subcellularLocation>
        <location evidence="1">Cell membrane</location>
        <topology evidence="1">Multi-pass membrane protein</topology>
    </subcellularLocation>
</comment>
<comment type="similarity">
    <text evidence="1">Belongs to the peptidase M48B family.</text>
</comment>
<proteinExistence type="inferred from homology"/>
<feature type="chain" id="PRO_1000020963" description="Protease HtpX homolog">
    <location>
        <begin position="1"/>
        <end position="291"/>
    </location>
</feature>
<feature type="transmembrane region" description="Helical" evidence="1">
    <location>
        <begin position="11"/>
        <end position="31"/>
    </location>
</feature>
<feature type="transmembrane region" description="Helical" evidence="1">
    <location>
        <begin position="34"/>
        <end position="54"/>
    </location>
</feature>
<feature type="transmembrane region" description="Helical" evidence="1">
    <location>
        <begin position="155"/>
        <end position="175"/>
    </location>
</feature>
<feature type="transmembrane region" description="Helical" evidence="1">
    <location>
        <begin position="186"/>
        <end position="206"/>
    </location>
</feature>
<feature type="active site" evidence="1">
    <location>
        <position position="141"/>
    </location>
</feature>
<feature type="binding site" evidence="1">
    <location>
        <position position="140"/>
    </location>
    <ligand>
        <name>Zn(2+)</name>
        <dbReference type="ChEBI" id="CHEBI:29105"/>
        <note>catalytic</note>
    </ligand>
</feature>
<feature type="binding site" evidence="1">
    <location>
        <position position="144"/>
    </location>
    <ligand>
        <name>Zn(2+)</name>
        <dbReference type="ChEBI" id="CHEBI:29105"/>
        <note>catalytic</note>
    </ligand>
</feature>
<feature type="binding site" evidence="1">
    <location>
        <position position="215"/>
    </location>
    <ligand>
        <name>Zn(2+)</name>
        <dbReference type="ChEBI" id="CHEBI:29105"/>
        <note>catalytic</note>
    </ligand>
</feature>
<reference key="1">
    <citation type="journal article" date="2003" name="Lancet">
        <title>Sequencing and analysis of the genome of the Whipple's disease bacterium Tropheryma whipplei.</title>
        <authorList>
            <person name="Bentley S.D."/>
            <person name="Maiwald M."/>
            <person name="Murphy L.D."/>
            <person name="Pallen M.J."/>
            <person name="Yeats C.A."/>
            <person name="Dover L.G."/>
            <person name="Norbertczak H.T."/>
            <person name="Besra G.S."/>
            <person name="Quail M.A."/>
            <person name="Harris D.E."/>
            <person name="von Herbay A."/>
            <person name="Goble A."/>
            <person name="Rutter S."/>
            <person name="Squares R."/>
            <person name="Squares S."/>
            <person name="Barrell B.G."/>
            <person name="Parkhill J."/>
            <person name="Relman D.A."/>
        </authorList>
    </citation>
    <scope>NUCLEOTIDE SEQUENCE [LARGE SCALE GENOMIC DNA]</scope>
    <source>
        <strain>TW08/27</strain>
    </source>
</reference>
<keyword id="KW-1003">Cell membrane</keyword>
<keyword id="KW-0378">Hydrolase</keyword>
<keyword id="KW-0472">Membrane</keyword>
<keyword id="KW-0479">Metal-binding</keyword>
<keyword id="KW-0482">Metalloprotease</keyword>
<keyword id="KW-0645">Protease</keyword>
<keyword id="KW-0812">Transmembrane</keyword>
<keyword id="KW-1133">Transmembrane helix</keyword>
<keyword id="KW-0862">Zinc</keyword>
<protein>
    <recommendedName>
        <fullName evidence="1">Protease HtpX homolog</fullName>
        <ecNumber evidence="1">3.4.24.-</ecNumber>
    </recommendedName>
</protein>
<name>HTPX_TROW8</name>